<keyword id="KW-0067">ATP-binding</keyword>
<keyword id="KW-0436">Ligase</keyword>
<keyword id="KW-0460">Magnesium</keyword>
<keyword id="KW-0479">Metal-binding</keyword>
<keyword id="KW-0547">Nucleotide-binding</keyword>
<keyword id="KW-0816">Tricarboxylic acid cycle</keyword>
<evidence type="ECO:0000255" key="1">
    <source>
        <dbReference type="HAMAP-Rule" id="MF_00558"/>
    </source>
</evidence>
<sequence>MNLHEYQAKALFAEYGLPVSEGFACDTAQEAVEAAGHIGGDMWVVKCQVHAGGRGKAGGVKVTGDKEEIRAFAEHWLGKNLVTYQTDEKGQPVAKILVESCTDIANELYLGAVVDRATRRVVFMASTEGGVEIETVAEETPELIHKAIIDPLTGPQPYQARDLGFKLGLNPTQMKQFTKVFMGLAKMFEDHDFALLEINPLVITDEGNIHCLDGKIGIDGNALFRQPKIRDMHDPSQDDAREAHAAKFELNYVALDGNVGCMVNGAGLAMGTMDIVNLHGGKPANFLDVGGGATKERVAEAFKIILSDSNVKAVLVNIFGGIVRCDMIAEGIIGAVKEVGVEVPVVVRLEGTNANLGRDVLASSGLDIIAAESLTDAAVKVVAAAEGK</sequence>
<organism>
    <name type="scientific">Shewanella halifaxensis (strain HAW-EB4)</name>
    <dbReference type="NCBI Taxonomy" id="458817"/>
    <lineage>
        <taxon>Bacteria</taxon>
        <taxon>Pseudomonadati</taxon>
        <taxon>Pseudomonadota</taxon>
        <taxon>Gammaproteobacteria</taxon>
        <taxon>Alteromonadales</taxon>
        <taxon>Shewanellaceae</taxon>
        <taxon>Shewanella</taxon>
    </lineage>
</organism>
<name>SUCC_SHEHH</name>
<proteinExistence type="inferred from homology"/>
<gene>
    <name evidence="1" type="primary">sucC</name>
    <name type="ordered locus">Shal_2487</name>
</gene>
<comment type="function">
    <text evidence="1">Succinyl-CoA synthetase functions in the citric acid cycle (TCA), coupling the hydrolysis of succinyl-CoA to the synthesis of either ATP or GTP and thus represents the only step of substrate-level phosphorylation in the TCA. The beta subunit provides nucleotide specificity of the enzyme and binds the substrate succinate, while the binding sites for coenzyme A and phosphate are found in the alpha subunit.</text>
</comment>
<comment type="catalytic activity">
    <reaction evidence="1">
        <text>succinate + ATP + CoA = succinyl-CoA + ADP + phosphate</text>
        <dbReference type="Rhea" id="RHEA:17661"/>
        <dbReference type="ChEBI" id="CHEBI:30031"/>
        <dbReference type="ChEBI" id="CHEBI:30616"/>
        <dbReference type="ChEBI" id="CHEBI:43474"/>
        <dbReference type="ChEBI" id="CHEBI:57287"/>
        <dbReference type="ChEBI" id="CHEBI:57292"/>
        <dbReference type="ChEBI" id="CHEBI:456216"/>
        <dbReference type="EC" id="6.2.1.5"/>
    </reaction>
    <physiologicalReaction direction="right-to-left" evidence="1">
        <dbReference type="Rhea" id="RHEA:17663"/>
    </physiologicalReaction>
</comment>
<comment type="catalytic activity">
    <reaction evidence="1">
        <text>GTP + succinate + CoA = succinyl-CoA + GDP + phosphate</text>
        <dbReference type="Rhea" id="RHEA:22120"/>
        <dbReference type="ChEBI" id="CHEBI:30031"/>
        <dbReference type="ChEBI" id="CHEBI:37565"/>
        <dbReference type="ChEBI" id="CHEBI:43474"/>
        <dbReference type="ChEBI" id="CHEBI:57287"/>
        <dbReference type="ChEBI" id="CHEBI:57292"/>
        <dbReference type="ChEBI" id="CHEBI:58189"/>
    </reaction>
    <physiologicalReaction direction="right-to-left" evidence="1">
        <dbReference type="Rhea" id="RHEA:22122"/>
    </physiologicalReaction>
</comment>
<comment type="cofactor">
    <cofactor evidence="1">
        <name>Mg(2+)</name>
        <dbReference type="ChEBI" id="CHEBI:18420"/>
    </cofactor>
    <text evidence="1">Binds 1 Mg(2+) ion per subunit.</text>
</comment>
<comment type="pathway">
    <text evidence="1">Carbohydrate metabolism; tricarboxylic acid cycle; succinate from succinyl-CoA (ligase route): step 1/1.</text>
</comment>
<comment type="subunit">
    <text evidence="1">Heterotetramer of two alpha and two beta subunits.</text>
</comment>
<comment type="similarity">
    <text evidence="1">Belongs to the succinate/malate CoA ligase beta subunit family.</text>
</comment>
<reference key="1">
    <citation type="submission" date="2008-01" db="EMBL/GenBank/DDBJ databases">
        <title>Complete sequence of Shewanella halifaxensis HAW-EB4.</title>
        <authorList>
            <consortium name="US DOE Joint Genome Institute"/>
            <person name="Copeland A."/>
            <person name="Lucas S."/>
            <person name="Lapidus A."/>
            <person name="Glavina del Rio T."/>
            <person name="Dalin E."/>
            <person name="Tice H."/>
            <person name="Bruce D."/>
            <person name="Goodwin L."/>
            <person name="Pitluck S."/>
            <person name="Sims D."/>
            <person name="Brettin T."/>
            <person name="Detter J.C."/>
            <person name="Han C."/>
            <person name="Kuske C.R."/>
            <person name="Schmutz J."/>
            <person name="Larimer F."/>
            <person name="Land M."/>
            <person name="Hauser L."/>
            <person name="Kyrpides N."/>
            <person name="Kim E."/>
            <person name="Zhao J.-S."/>
            <person name="Richardson P."/>
        </authorList>
    </citation>
    <scope>NUCLEOTIDE SEQUENCE [LARGE SCALE GENOMIC DNA]</scope>
    <source>
        <strain>HAW-EB4</strain>
    </source>
</reference>
<dbReference type="EC" id="6.2.1.5" evidence="1"/>
<dbReference type="EMBL" id="CP000931">
    <property type="protein sequence ID" value="ABZ77044.1"/>
    <property type="molecule type" value="Genomic_DNA"/>
</dbReference>
<dbReference type="RefSeq" id="WP_012277572.1">
    <property type="nucleotide sequence ID" value="NC_010334.1"/>
</dbReference>
<dbReference type="SMR" id="B0TJP8"/>
<dbReference type="STRING" id="458817.Shal_2487"/>
<dbReference type="KEGG" id="shl:Shal_2487"/>
<dbReference type="eggNOG" id="COG0045">
    <property type="taxonomic scope" value="Bacteria"/>
</dbReference>
<dbReference type="HOGENOM" id="CLU_037430_0_2_6"/>
<dbReference type="OrthoDB" id="9802602at2"/>
<dbReference type="UniPathway" id="UPA00223">
    <property type="reaction ID" value="UER00999"/>
</dbReference>
<dbReference type="Proteomes" id="UP000001317">
    <property type="component" value="Chromosome"/>
</dbReference>
<dbReference type="GO" id="GO:0005829">
    <property type="term" value="C:cytosol"/>
    <property type="evidence" value="ECO:0007669"/>
    <property type="project" value="TreeGrafter"/>
</dbReference>
<dbReference type="GO" id="GO:0042709">
    <property type="term" value="C:succinate-CoA ligase complex"/>
    <property type="evidence" value="ECO:0007669"/>
    <property type="project" value="TreeGrafter"/>
</dbReference>
<dbReference type="GO" id="GO:0005524">
    <property type="term" value="F:ATP binding"/>
    <property type="evidence" value="ECO:0007669"/>
    <property type="project" value="UniProtKB-UniRule"/>
</dbReference>
<dbReference type="GO" id="GO:0000287">
    <property type="term" value="F:magnesium ion binding"/>
    <property type="evidence" value="ECO:0007669"/>
    <property type="project" value="UniProtKB-UniRule"/>
</dbReference>
<dbReference type="GO" id="GO:0004775">
    <property type="term" value="F:succinate-CoA ligase (ADP-forming) activity"/>
    <property type="evidence" value="ECO:0007669"/>
    <property type="project" value="UniProtKB-UniRule"/>
</dbReference>
<dbReference type="GO" id="GO:0004776">
    <property type="term" value="F:succinate-CoA ligase (GDP-forming) activity"/>
    <property type="evidence" value="ECO:0007669"/>
    <property type="project" value="RHEA"/>
</dbReference>
<dbReference type="GO" id="GO:0006104">
    <property type="term" value="P:succinyl-CoA metabolic process"/>
    <property type="evidence" value="ECO:0007669"/>
    <property type="project" value="TreeGrafter"/>
</dbReference>
<dbReference type="GO" id="GO:0006099">
    <property type="term" value="P:tricarboxylic acid cycle"/>
    <property type="evidence" value="ECO:0007669"/>
    <property type="project" value="UniProtKB-UniRule"/>
</dbReference>
<dbReference type="FunFam" id="3.30.1490.20:FF:000002">
    <property type="entry name" value="Succinate--CoA ligase [ADP-forming] subunit beta"/>
    <property type="match status" value="1"/>
</dbReference>
<dbReference type="FunFam" id="3.30.470.20:FF:000002">
    <property type="entry name" value="Succinate--CoA ligase [ADP-forming] subunit beta"/>
    <property type="match status" value="1"/>
</dbReference>
<dbReference type="FunFam" id="3.40.50.261:FF:000001">
    <property type="entry name" value="Succinate--CoA ligase [ADP-forming] subunit beta"/>
    <property type="match status" value="1"/>
</dbReference>
<dbReference type="Gene3D" id="3.30.1490.20">
    <property type="entry name" value="ATP-grasp fold, A domain"/>
    <property type="match status" value="1"/>
</dbReference>
<dbReference type="Gene3D" id="3.30.470.20">
    <property type="entry name" value="ATP-grasp fold, B domain"/>
    <property type="match status" value="1"/>
</dbReference>
<dbReference type="Gene3D" id="3.40.50.261">
    <property type="entry name" value="Succinyl-CoA synthetase domains"/>
    <property type="match status" value="1"/>
</dbReference>
<dbReference type="HAMAP" id="MF_00558">
    <property type="entry name" value="Succ_CoA_beta"/>
    <property type="match status" value="1"/>
</dbReference>
<dbReference type="InterPro" id="IPR011761">
    <property type="entry name" value="ATP-grasp"/>
</dbReference>
<dbReference type="InterPro" id="IPR013650">
    <property type="entry name" value="ATP-grasp_succ-CoA_synth-type"/>
</dbReference>
<dbReference type="InterPro" id="IPR013815">
    <property type="entry name" value="ATP_grasp_subdomain_1"/>
</dbReference>
<dbReference type="InterPro" id="IPR017866">
    <property type="entry name" value="Succ-CoA_synthase_bsu_CS"/>
</dbReference>
<dbReference type="InterPro" id="IPR005811">
    <property type="entry name" value="SUCC_ACL_C"/>
</dbReference>
<dbReference type="InterPro" id="IPR005809">
    <property type="entry name" value="Succ_CoA_ligase-like_bsu"/>
</dbReference>
<dbReference type="InterPro" id="IPR016102">
    <property type="entry name" value="Succinyl-CoA_synth-like"/>
</dbReference>
<dbReference type="NCBIfam" id="NF001913">
    <property type="entry name" value="PRK00696.1"/>
    <property type="match status" value="1"/>
</dbReference>
<dbReference type="NCBIfam" id="TIGR01016">
    <property type="entry name" value="sucCoAbeta"/>
    <property type="match status" value="1"/>
</dbReference>
<dbReference type="PANTHER" id="PTHR11815:SF10">
    <property type="entry name" value="SUCCINATE--COA LIGASE [GDP-FORMING] SUBUNIT BETA, MITOCHONDRIAL"/>
    <property type="match status" value="1"/>
</dbReference>
<dbReference type="PANTHER" id="PTHR11815">
    <property type="entry name" value="SUCCINYL-COA SYNTHETASE BETA CHAIN"/>
    <property type="match status" value="1"/>
</dbReference>
<dbReference type="Pfam" id="PF08442">
    <property type="entry name" value="ATP-grasp_2"/>
    <property type="match status" value="1"/>
</dbReference>
<dbReference type="Pfam" id="PF00549">
    <property type="entry name" value="Ligase_CoA"/>
    <property type="match status" value="1"/>
</dbReference>
<dbReference type="PIRSF" id="PIRSF001554">
    <property type="entry name" value="SucCS_beta"/>
    <property type="match status" value="1"/>
</dbReference>
<dbReference type="SUPFAM" id="SSF56059">
    <property type="entry name" value="Glutathione synthetase ATP-binding domain-like"/>
    <property type="match status" value="1"/>
</dbReference>
<dbReference type="SUPFAM" id="SSF52210">
    <property type="entry name" value="Succinyl-CoA synthetase domains"/>
    <property type="match status" value="1"/>
</dbReference>
<dbReference type="PROSITE" id="PS50975">
    <property type="entry name" value="ATP_GRASP"/>
    <property type="match status" value="1"/>
</dbReference>
<dbReference type="PROSITE" id="PS01217">
    <property type="entry name" value="SUCCINYL_COA_LIG_3"/>
    <property type="match status" value="1"/>
</dbReference>
<protein>
    <recommendedName>
        <fullName evidence="1">Succinate--CoA ligase [ADP-forming] subunit beta</fullName>
        <ecNumber evidence="1">6.2.1.5</ecNumber>
    </recommendedName>
    <alternativeName>
        <fullName evidence="1">Succinyl-CoA synthetase subunit beta</fullName>
        <shortName evidence="1">SCS-beta</shortName>
    </alternativeName>
</protein>
<feature type="chain" id="PRO_1000082223" description="Succinate--CoA ligase [ADP-forming] subunit beta">
    <location>
        <begin position="1"/>
        <end position="388"/>
    </location>
</feature>
<feature type="domain" description="ATP-grasp" evidence="1">
    <location>
        <begin position="9"/>
        <end position="244"/>
    </location>
</feature>
<feature type="binding site" evidence="1">
    <location>
        <position position="46"/>
    </location>
    <ligand>
        <name>ATP</name>
        <dbReference type="ChEBI" id="CHEBI:30616"/>
    </ligand>
</feature>
<feature type="binding site" evidence="1">
    <location>
        <begin position="53"/>
        <end position="55"/>
    </location>
    <ligand>
        <name>ATP</name>
        <dbReference type="ChEBI" id="CHEBI:30616"/>
    </ligand>
</feature>
<feature type="binding site" evidence="1">
    <location>
        <position position="99"/>
    </location>
    <ligand>
        <name>ATP</name>
        <dbReference type="ChEBI" id="CHEBI:30616"/>
    </ligand>
</feature>
<feature type="binding site" evidence="1">
    <location>
        <position position="102"/>
    </location>
    <ligand>
        <name>ATP</name>
        <dbReference type="ChEBI" id="CHEBI:30616"/>
    </ligand>
</feature>
<feature type="binding site" evidence="1">
    <location>
        <position position="107"/>
    </location>
    <ligand>
        <name>ATP</name>
        <dbReference type="ChEBI" id="CHEBI:30616"/>
    </ligand>
</feature>
<feature type="binding site" evidence="1">
    <location>
        <position position="199"/>
    </location>
    <ligand>
        <name>Mg(2+)</name>
        <dbReference type="ChEBI" id="CHEBI:18420"/>
    </ligand>
</feature>
<feature type="binding site" evidence="1">
    <location>
        <position position="213"/>
    </location>
    <ligand>
        <name>Mg(2+)</name>
        <dbReference type="ChEBI" id="CHEBI:18420"/>
    </ligand>
</feature>
<feature type="binding site" evidence="1">
    <location>
        <position position="264"/>
    </location>
    <ligand>
        <name>substrate</name>
        <note>ligand shared with subunit alpha</note>
    </ligand>
</feature>
<feature type="binding site" evidence="1">
    <location>
        <begin position="321"/>
        <end position="323"/>
    </location>
    <ligand>
        <name>substrate</name>
        <note>ligand shared with subunit alpha</note>
    </ligand>
</feature>
<accession>B0TJP8</accession>